<accession>P58202</accession>
<protein>
    <recommendedName>
        <fullName>Pyrrolidone-carboxylate peptidase 2</fullName>
        <ecNumber>3.4.19.3</ecNumber>
    </recommendedName>
    <alternativeName>
        <fullName>5-oxoprolyl-peptidase 2</fullName>
    </alternativeName>
    <alternativeName>
        <fullName>Pyroglutamyl-peptidase I 2</fullName>
        <shortName>PGP-I 2</shortName>
        <shortName>Pyrase 2</shortName>
    </alternativeName>
</protein>
<feature type="chain" id="PRO_0000184759" description="Pyrrolidone-carboxylate peptidase 2">
    <location>
        <begin position="1"/>
        <end position="209"/>
    </location>
</feature>
<feature type="active site" evidence="1">
    <location>
        <position position="79"/>
    </location>
</feature>
<feature type="active site" evidence="1">
    <location>
        <position position="142"/>
    </location>
</feature>
<feature type="active site" evidence="1">
    <location>
        <position position="164"/>
    </location>
</feature>
<dbReference type="EC" id="3.4.19.3"/>
<dbReference type="EMBL" id="AE006641">
    <property type="protein sequence ID" value="AAK41818.1"/>
    <property type="molecule type" value="Genomic_DNA"/>
</dbReference>
<dbReference type="PIR" id="C90320">
    <property type="entry name" value="C90320"/>
</dbReference>
<dbReference type="RefSeq" id="WP_010923507.1">
    <property type="nucleotide sequence ID" value="NC_002754.1"/>
</dbReference>
<dbReference type="SMR" id="P58202"/>
<dbReference type="FunCoup" id="P58202">
    <property type="interactions" value="49"/>
</dbReference>
<dbReference type="MEROPS" id="C15.001"/>
<dbReference type="PaxDb" id="273057-SSO1607"/>
<dbReference type="EnsemblBacteria" id="AAK41818">
    <property type="protein sequence ID" value="AAK41818"/>
    <property type="gene ID" value="SSO1607"/>
</dbReference>
<dbReference type="GeneID" id="15297022"/>
<dbReference type="KEGG" id="sso:SSO1607"/>
<dbReference type="PATRIC" id="fig|273057.12.peg.1645"/>
<dbReference type="eggNOG" id="arCOG05850">
    <property type="taxonomic scope" value="Archaea"/>
</dbReference>
<dbReference type="HOGENOM" id="CLU_043960_4_3_2"/>
<dbReference type="InParanoid" id="P58202"/>
<dbReference type="PhylomeDB" id="P58202"/>
<dbReference type="Proteomes" id="UP000001974">
    <property type="component" value="Chromosome"/>
</dbReference>
<dbReference type="GO" id="GO:0005829">
    <property type="term" value="C:cytosol"/>
    <property type="evidence" value="ECO:0007669"/>
    <property type="project" value="InterPro"/>
</dbReference>
<dbReference type="GO" id="GO:0016920">
    <property type="term" value="F:pyroglutamyl-peptidase activity"/>
    <property type="evidence" value="ECO:0007669"/>
    <property type="project" value="UniProtKB-UniRule"/>
</dbReference>
<dbReference type="GO" id="GO:0006508">
    <property type="term" value="P:proteolysis"/>
    <property type="evidence" value="ECO:0007669"/>
    <property type="project" value="UniProtKB-KW"/>
</dbReference>
<dbReference type="CDD" id="cd00501">
    <property type="entry name" value="Peptidase_C15"/>
    <property type="match status" value="1"/>
</dbReference>
<dbReference type="FunFam" id="3.40.630.20:FF:000005">
    <property type="entry name" value="Pyrrolidone-carboxylate peptidase"/>
    <property type="match status" value="1"/>
</dbReference>
<dbReference type="Gene3D" id="3.40.630.20">
    <property type="entry name" value="Peptidase C15, pyroglutamyl peptidase I-like"/>
    <property type="match status" value="1"/>
</dbReference>
<dbReference type="HAMAP" id="MF_00417">
    <property type="entry name" value="Pyrrolid_peptidase"/>
    <property type="match status" value="1"/>
</dbReference>
<dbReference type="InterPro" id="IPR000816">
    <property type="entry name" value="Peptidase_C15"/>
</dbReference>
<dbReference type="InterPro" id="IPR016125">
    <property type="entry name" value="Peptidase_C15-like"/>
</dbReference>
<dbReference type="InterPro" id="IPR036440">
    <property type="entry name" value="Peptidase_C15-like_sf"/>
</dbReference>
<dbReference type="InterPro" id="IPR029762">
    <property type="entry name" value="PGP-I_bact-type"/>
</dbReference>
<dbReference type="InterPro" id="IPR033694">
    <property type="entry name" value="PGPEP1_Cys_AS"/>
</dbReference>
<dbReference type="InterPro" id="IPR033693">
    <property type="entry name" value="PGPEP1_Glu_AS"/>
</dbReference>
<dbReference type="NCBIfam" id="NF009672">
    <property type="entry name" value="PRK13193.1"/>
    <property type="match status" value="1"/>
</dbReference>
<dbReference type="PANTHER" id="PTHR23402">
    <property type="entry name" value="PROTEASE FAMILY C15 PYROGLUTAMYL-PEPTIDASE I-RELATED"/>
    <property type="match status" value="1"/>
</dbReference>
<dbReference type="PANTHER" id="PTHR23402:SF1">
    <property type="entry name" value="PYROGLUTAMYL-PEPTIDASE I"/>
    <property type="match status" value="1"/>
</dbReference>
<dbReference type="Pfam" id="PF01470">
    <property type="entry name" value="Peptidase_C15"/>
    <property type="match status" value="1"/>
</dbReference>
<dbReference type="PIRSF" id="PIRSF015592">
    <property type="entry name" value="Prld-crbxl_pptds"/>
    <property type="match status" value="1"/>
</dbReference>
<dbReference type="PRINTS" id="PR00706">
    <property type="entry name" value="PYROGLUPTASE"/>
</dbReference>
<dbReference type="SUPFAM" id="SSF53182">
    <property type="entry name" value="Pyrrolidone carboxyl peptidase (pyroglutamate aminopeptidase)"/>
    <property type="match status" value="1"/>
</dbReference>
<dbReference type="PROSITE" id="PS01334">
    <property type="entry name" value="PYRASE_CYS"/>
    <property type="match status" value="1"/>
</dbReference>
<dbReference type="PROSITE" id="PS01333">
    <property type="entry name" value="PYRASE_GLU"/>
    <property type="match status" value="1"/>
</dbReference>
<proteinExistence type="inferred from homology"/>
<sequence length="209" mass="23404">MTVLLFGFEPFLEYKENPSQLIVEALNGSTILKEEVKGVILPVEYEKIEDLIVTKIREMKPILTLGIGVAPGRAKITPEKIAINYKYSREGDNAGKKYKGEKIDPLGQDGIFTNIPVEDLVDLLNENGIPAELSLSAGSYLCNNAMYIIIREARKYNSLGGFIHVPLHESYAARIQRPIPSMSLDTMIRGIRLSMEFILTNKKENLTFS</sequence>
<reference key="1">
    <citation type="journal article" date="2001" name="Proc. Natl. Acad. Sci. U.S.A.">
        <title>The complete genome of the crenarchaeon Sulfolobus solfataricus P2.</title>
        <authorList>
            <person name="She Q."/>
            <person name="Singh R.K."/>
            <person name="Confalonieri F."/>
            <person name="Zivanovic Y."/>
            <person name="Allard G."/>
            <person name="Awayez M.J."/>
            <person name="Chan-Weiher C.C.-Y."/>
            <person name="Clausen I.G."/>
            <person name="Curtis B.A."/>
            <person name="De Moors A."/>
            <person name="Erauso G."/>
            <person name="Fletcher C."/>
            <person name="Gordon P.M.K."/>
            <person name="Heikamp-de Jong I."/>
            <person name="Jeffries A.C."/>
            <person name="Kozera C.J."/>
            <person name="Medina N."/>
            <person name="Peng X."/>
            <person name="Thi-Ngoc H.P."/>
            <person name="Redder P."/>
            <person name="Schenk M.E."/>
            <person name="Theriault C."/>
            <person name="Tolstrup N."/>
            <person name="Charlebois R.L."/>
            <person name="Doolittle W.F."/>
            <person name="Duguet M."/>
            <person name="Gaasterland T."/>
            <person name="Garrett R.A."/>
            <person name="Ragan M.A."/>
            <person name="Sensen C.W."/>
            <person name="Van der Oost J."/>
        </authorList>
    </citation>
    <scope>NUCLEOTIDE SEQUENCE [LARGE SCALE GENOMIC DNA]</scope>
    <source>
        <strain>ATCC 35092 / DSM 1617 / JCM 11322 / P2</strain>
    </source>
</reference>
<comment type="function">
    <text evidence="1">Removes 5-oxoproline from various penultimate amino acid residues except L-proline.</text>
</comment>
<comment type="catalytic activity">
    <reaction>
        <text>Release of an N-terminal pyroglutamyl group from a polypeptide, the second amino acid generally not being Pro.</text>
        <dbReference type="EC" id="3.4.19.3"/>
    </reaction>
</comment>
<comment type="subunit">
    <text evidence="1">Homotetramer.</text>
</comment>
<comment type="subcellular location">
    <subcellularLocation>
        <location evidence="1">Cytoplasm</location>
    </subcellularLocation>
</comment>
<comment type="similarity">
    <text evidence="2">Belongs to the peptidase C15 family.</text>
</comment>
<gene>
    <name type="primary">pcp2</name>
    <name type="ordered locus">SSO1607</name>
</gene>
<evidence type="ECO:0000250" key="1"/>
<evidence type="ECO:0000305" key="2"/>
<organism>
    <name type="scientific">Saccharolobus solfataricus (strain ATCC 35092 / DSM 1617 / JCM 11322 / P2)</name>
    <name type="common">Sulfolobus solfataricus</name>
    <dbReference type="NCBI Taxonomy" id="273057"/>
    <lineage>
        <taxon>Archaea</taxon>
        <taxon>Thermoproteota</taxon>
        <taxon>Thermoprotei</taxon>
        <taxon>Sulfolobales</taxon>
        <taxon>Sulfolobaceae</taxon>
        <taxon>Saccharolobus</taxon>
    </lineage>
</organism>
<name>PCP2_SACS2</name>
<keyword id="KW-0963">Cytoplasm</keyword>
<keyword id="KW-0378">Hydrolase</keyword>
<keyword id="KW-0645">Protease</keyword>
<keyword id="KW-1185">Reference proteome</keyword>
<keyword id="KW-0788">Thiol protease</keyword>